<feature type="chain" id="PRO_0000075100" description="Alanine--tRNA ligase">
    <location>
        <begin position="1"/>
        <end position="887"/>
    </location>
</feature>
<feature type="binding site" evidence="1">
    <location>
        <position position="573"/>
    </location>
    <ligand>
        <name>Zn(2+)</name>
        <dbReference type="ChEBI" id="CHEBI:29105"/>
    </ligand>
</feature>
<feature type="binding site" evidence="1">
    <location>
        <position position="577"/>
    </location>
    <ligand>
        <name>Zn(2+)</name>
        <dbReference type="ChEBI" id="CHEBI:29105"/>
    </ligand>
</feature>
<feature type="binding site" evidence="1">
    <location>
        <position position="676"/>
    </location>
    <ligand>
        <name>Zn(2+)</name>
        <dbReference type="ChEBI" id="CHEBI:29105"/>
    </ligand>
</feature>
<feature type="binding site" evidence="1">
    <location>
        <position position="680"/>
    </location>
    <ligand>
        <name>Zn(2+)</name>
        <dbReference type="ChEBI" id="CHEBI:29105"/>
    </ligand>
</feature>
<dbReference type="EC" id="6.1.1.7" evidence="1"/>
<dbReference type="EMBL" id="CR931997">
    <property type="protein sequence ID" value="CAI37202.1"/>
    <property type="molecule type" value="Genomic_DNA"/>
</dbReference>
<dbReference type="RefSeq" id="WP_011273605.1">
    <property type="nucleotide sequence ID" value="NC_007164.1"/>
</dbReference>
<dbReference type="SMR" id="Q4JVF5"/>
<dbReference type="STRING" id="306537.jk1038"/>
<dbReference type="KEGG" id="cjk:jk1038"/>
<dbReference type="PATRIC" id="fig|306537.10.peg.1049"/>
<dbReference type="eggNOG" id="COG0013">
    <property type="taxonomic scope" value="Bacteria"/>
</dbReference>
<dbReference type="HOGENOM" id="CLU_004485_1_1_11"/>
<dbReference type="OrthoDB" id="9803884at2"/>
<dbReference type="Proteomes" id="UP000000545">
    <property type="component" value="Chromosome"/>
</dbReference>
<dbReference type="GO" id="GO:0005829">
    <property type="term" value="C:cytosol"/>
    <property type="evidence" value="ECO:0007669"/>
    <property type="project" value="TreeGrafter"/>
</dbReference>
<dbReference type="GO" id="GO:0004813">
    <property type="term" value="F:alanine-tRNA ligase activity"/>
    <property type="evidence" value="ECO:0007669"/>
    <property type="project" value="UniProtKB-UniRule"/>
</dbReference>
<dbReference type="GO" id="GO:0002161">
    <property type="term" value="F:aminoacyl-tRNA deacylase activity"/>
    <property type="evidence" value="ECO:0007669"/>
    <property type="project" value="TreeGrafter"/>
</dbReference>
<dbReference type="GO" id="GO:0005524">
    <property type="term" value="F:ATP binding"/>
    <property type="evidence" value="ECO:0007669"/>
    <property type="project" value="UniProtKB-UniRule"/>
</dbReference>
<dbReference type="GO" id="GO:0000049">
    <property type="term" value="F:tRNA binding"/>
    <property type="evidence" value="ECO:0007669"/>
    <property type="project" value="UniProtKB-KW"/>
</dbReference>
<dbReference type="GO" id="GO:0008270">
    <property type="term" value="F:zinc ion binding"/>
    <property type="evidence" value="ECO:0007669"/>
    <property type="project" value="UniProtKB-UniRule"/>
</dbReference>
<dbReference type="GO" id="GO:0006419">
    <property type="term" value="P:alanyl-tRNA aminoacylation"/>
    <property type="evidence" value="ECO:0007669"/>
    <property type="project" value="UniProtKB-UniRule"/>
</dbReference>
<dbReference type="CDD" id="cd00673">
    <property type="entry name" value="AlaRS_core"/>
    <property type="match status" value="1"/>
</dbReference>
<dbReference type="FunFam" id="2.40.30.130:FF:000001">
    <property type="entry name" value="Alanine--tRNA ligase"/>
    <property type="match status" value="1"/>
</dbReference>
<dbReference type="FunFam" id="3.10.310.40:FF:000001">
    <property type="entry name" value="Alanine--tRNA ligase"/>
    <property type="match status" value="1"/>
</dbReference>
<dbReference type="FunFam" id="3.30.54.20:FF:000001">
    <property type="entry name" value="Alanine--tRNA ligase"/>
    <property type="match status" value="1"/>
</dbReference>
<dbReference type="FunFam" id="3.30.930.10:FF:000004">
    <property type="entry name" value="Alanine--tRNA ligase"/>
    <property type="match status" value="1"/>
</dbReference>
<dbReference type="FunFam" id="3.30.980.10:FF:000004">
    <property type="entry name" value="Alanine--tRNA ligase, cytoplasmic"/>
    <property type="match status" value="1"/>
</dbReference>
<dbReference type="Gene3D" id="2.40.30.130">
    <property type="match status" value="1"/>
</dbReference>
<dbReference type="Gene3D" id="3.10.310.40">
    <property type="match status" value="1"/>
</dbReference>
<dbReference type="Gene3D" id="3.30.54.20">
    <property type="match status" value="1"/>
</dbReference>
<dbReference type="Gene3D" id="6.10.250.550">
    <property type="match status" value="1"/>
</dbReference>
<dbReference type="Gene3D" id="3.30.930.10">
    <property type="entry name" value="Bira Bifunctional Protein, Domain 2"/>
    <property type="match status" value="1"/>
</dbReference>
<dbReference type="Gene3D" id="3.30.980.10">
    <property type="entry name" value="Threonyl-trna Synthetase, Chain A, domain 2"/>
    <property type="match status" value="1"/>
</dbReference>
<dbReference type="HAMAP" id="MF_00036_B">
    <property type="entry name" value="Ala_tRNA_synth_B"/>
    <property type="match status" value="1"/>
</dbReference>
<dbReference type="InterPro" id="IPR045864">
    <property type="entry name" value="aa-tRNA-synth_II/BPL/LPL"/>
</dbReference>
<dbReference type="InterPro" id="IPR002318">
    <property type="entry name" value="Ala-tRNA-lgiase_IIc"/>
</dbReference>
<dbReference type="InterPro" id="IPR018162">
    <property type="entry name" value="Ala-tRNA-ligase_IIc_anticod-bd"/>
</dbReference>
<dbReference type="InterPro" id="IPR018165">
    <property type="entry name" value="Ala-tRNA-synth_IIc_core"/>
</dbReference>
<dbReference type="InterPro" id="IPR018164">
    <property type="entry name" value="Ala-tRNA-synth_IIc_N"/>
</dbReference>
<dbReference type="InterPro" id="IPR050058">
    <property type="entry name" value="Ala-tRNA_ligase"/>
</dbReference>
<dbReference type="InterPro" id="IPR023033">
    <property type="entry name" value="Ala_tRNA_ligase_euk/bac"/>
</dbReference>
<dbReference type="InterPro" id="IPR003156">
    <property type="entry name" value="DHHA1_dom"/>
</dbReference>
<dbReference type="InterPro" id="IPR018163">
    <property type="entry name" value="Thr/Ala-tRNA-synth_IIc_edit"/>
</dbReference>
<dbReference type="InterPro" id="IPR009000">
    <property type="entry name" value="Transl_B-barrel_sf"/>
</dbReference>
<dbReference type="InterPro" id="IPR012947">
    <property type="entry name" value="tRNA_SAD"/>
</dbReference>
<dbReference type="NCBIfam" id="TIGR00344">
    <property type="entry name" value="alaS"/>
    <property type="match status" value="1"/>
</dbReference>
<dbReference type="PANTHER" id="PTHR11777:SF9">
    <property type="entry name" value="ALANINE--TRNA LIGASE, CYTOPLASMIC"/>
    <property type="match status" value="1"/>
</dbReference>
<dbReference type="PANTHER" id="PTHR11777">
    <property type="entry name" value="ALANYL-TRNA SYNTHETASE"/>
    <property type="match status" value="1"/>
</dbReference>
<dbReference type="Pfam" id="PF02272">
    <property type="entry name" value="DHHA1"/>
    <property type="match status" value="1"/>
</dbReference>
<dbReference type="Pfam" id="PF01411">
    <property type="entry name" value="tRNA-synt_2c"/>
    <property type="match status" value="1"/>
</dbReference>
<dbReference type="Pfam" id="PF07973">
    <property type="entry name" value="tRNA_SAD"/>
    <property type="match status" value="1"/>
</dbReference>
<dbReference type="PRINTS" id="PR00980">
    <property type="entry name" value="TRNASYNTHALA"/>
</dbReference>
<dbReference type="SMART" id="SM00863">
    <property type="entry name" value="tRNA_SAD"/>
    <property type="match status" value="1"/>
</dbReference>
<dbReference type="SUPFAM" id="SSF55681">
    <property type="entry name" value="Class II aaRS and biotin synthetases"/>
    <property type="match status" value="1"/>
</dbReference>
<dbReference type="SUPFAM" id="SSF101353">
    <property type="entry name" value="Putative anticodon-binding domain of alanyl-tRNA synthetase (AlaRS)"/>
    <property type="match status" value="1"/>
</dbReference>
<dbReference type="SUPFAM" id="SSF55186">
    <property type="entry name" value="ThrRS/AlaRS common domain"/>
    <property type="match status" value="1"/>
</dbReference>
<dbReference type="SUPFAM" id="SSF50447">
    <property type="entry name" value="Translation proteins"/>
    <property type="match status" value="1"/>
</dbReference>
<dbReference type="PROSITE" id="PS50860">
    <property type="entry name" value="AA_TRNA_LIGASE_II_ALA"/>
    <property type="match status" value="1"/>
</dbReference>
<proteinExistence type="inferred from homology"/>
<gene>
    <name evidence="1" type="primary">alaS</name>
    <name type="ordered locus">jk1038</name>
</gene>
<organism>
    <name type="scientific">Corynebacterium jeikeium (strain K411)</name>
    <dbReference type="NCBI Taxonomy" id="306537"/>
    <lineage>
        <taxon>Bacteria</taxon>
        <taxon>Bacillati</taxon>
        <taxon>Actinomycetota</taxon>
        <taxon>Actinomycetes</taxon>
        <taxon>Mycobacteriales</taxon>
        <taxon>Corynebacteriaceae</taxon>
        <taxon>Corynebacterium</taxon>
    </lineage>
</organism>
<keyword id="KW-0030">Aminoacyl-tRNA synthetase</keyword>
<keyword id="KW-0067">ATP-binding</keyword>
<keyword id="KW-0963">Cytoplasm</keyword>
<keyword id="KW-0436">Ligase</keyword>
<keyword id="KW-0479">Metal-binding</keyword>
<keyword id="KW-0547">Nucleotide-binding</keyword>
<keyword id="KW-0648">Protein biosynthesis</keyword>
<keyword id="KW-1185">Reference proteome</keyword>
<keyword id="KW-0694">RNA-binding</keyword>
<keyword id="KW-0820">tRNA-binding</keyword>
<keyword id="KW-0862">Zinc</keyword>
<evidence type="ECO:0000255" key="1">
    <source>
        <dbReference type="HAMAP-Rule" id="MF_00036"/>
    </source>
</evidence>
<comment type="function">
    <text evidence="1">Catalyzes the attachment of alanine to tRNA(Ala) in a two-step reaction: alanine is first activated by ATP to form Ala-AMP and then transferred to the acceptor end of tRNA(Ala). Also edits incorrectly charged Ser-tRNA(Ala) and Gly-tRNA(Ala) via its editing domain.</text>
</comment>
<comment type="catalytic activity">
    <reaction evidence="1">
        <text>tRNA(Ala) + L-alanine + ATP = L-alanyl-tRNA(Ala) + AMP + diphosphate</text>
        <dbReference type="Rhea" id="RHEA:12540"/>
        <dbReference type="Rhea" id="RHEA-COMP:9657"/>
        <dbReference type="Rhea" id="RHEA-COMP:9923"/>
        <dbReference type="ChEBI" id="CHEBI:30616"/>
        <dbReference type="ChEBI" id="CHEBI:33019"/>
        <dbReference type="ChEBI" id="CHEBI:57972"/>
        <dbReference type="ChEBI" id="CHEBI:78442"/>
        <dbReference type="ChEBI" id="CHEBI:78497"/>
        <dbReference type="ChEBI" id="CHEBI:456215"/>
        <dbReference type="EC" id="6.1.1.7"/>
    </reaction>
</comment>
<comment type="cofactor">
    <cofactor evidence="1">
        <name>Zn(2+)</name>
        <dbReference type="ChEBI" id="CHEBI:29105"/>
    </cofactor>
    <text evidence="1">Binds 1 zinc ion per subunit.</text>
</comment>
<comment type="subcellular location">
    <subcellularLocation>
        <location evidence="1">Cytoplasm</location>
    </subcellularLocation>
</comment>
<comment type="domain">
    <text evidence="1">Consists of three domains; the N-terminal catalytic domain, the editing domain and the C-terminal C-Ala domain. The editing domain removes incorrectly charged amino acids, while the C-Ala domain, along with tRNA(Ala), serves as a bridge to cooperatively bring together the editing and aminoacylation centers thus stimulating deacylation of misacylated tRNAs.</text>
</comment>
<comment type="similarity">
    <text evidence="1">Belongs to the class-II aminoacyl-tRNA synthetase family.</text>
</comment>
<accession>Q4JVF5</accession>
<reference key="1">
    <citation type="journal article" date="2005" name="J. Bacteriol.">
        <title>Complete genome sequence and analysis of the multiresistant nosocomial pathogen Corynebacterium jeikeium K411, a lipid-requiring bacterium of the human skin flora.</title>
        <authorList>
            <person name="Tauch A."/>
            <person name="Kaiser O."/>
            <person name="Hain T."/>
            <person name="Goesmann A."/>
            <person name="Weisshaar B."/>
            <person name="Albersmeier A."/>
            <person name="Bekel T."/>
            <person name="Bischoff N."/>
            <person name="Brune I."/>
            <person name="Chakraborty T."/>
            <person name="Kalinowski J."/>
            <person name="Meyer F."/>
            <person name="Rupp O."/>
            <person name="Schneiker S."/>
            <person name="Viehoever P."/>
            <person name="Puehler A."/>
        </authorList>
    </citation>
    <scope>NUCLEOTIDE SEQUENCE [LARGE SCALE GENOMIC DNA]</scope>
    <source>
        <strain>K411</strain>
    </source>
</reference>
<sequence>MQTHEIRQRFIEHFTKAGHTEVPSASLILDDPNLLFVNAGMVPFKPYFLGQQNPPFENGTATSIQKCVRTLDIDEVGITTRHNTFFQMAGNFSFGAYFKEGAITHAWTLLTNPVEEGGLGLDPERLWVTVFTDDDEAAEIWNKKIGVPEHKIQRLGMEDNYWSMGIPGPCGPCSEIYYDRGPEHGQEGGPIVDDTRYIEIWNLVFMENERGEGLGKGNFEIVGKLPKKNIDTGLGIERVACILQDVDNVYETDLLRPVIDVAQEVTGAKYGADQANDVRFRVIADHSRTGLMLMLDGVTPGNEGRGYILRRLLRRIIRSARLLGATGETLEKFMDTVRETMTPSYPEIAENYERIRAVALAEEKSFLKTLESGSQMFDNWAHEAKERGEDTVPGDVAFSLHDTHGFPIDLTQEMAAEADLKVDIDGFHELMAEQKARAKADNNAKKLGHVDQTIYRPFVDNHPTVFTGYENLADEASVLGIIRDGALVETAPEGAAAQVILDRTPFYAEAGGQMADRGEMTSTSGAARVEDVQKVGKKVWVHHVTVSGGELAVGQKVQATVDKAWRHQARQAHSGTHLIHAALREVLGPTAVQAGSMNKPGYLRFDFNYGEQLTEHQLNQIEEIANGAVDSDYQVNTIETSLEEAKAMGAMALFGENYGSEVRVVEIGGPFSMELCGGIHVEHSSQVGPISVLGESSVGSGVRRIEAYTGMDSFRFLSTEKSLVSGLATSLKTPSEELPDRIDALTAKLKAAEKQIQQLRAQQLQGQVGQLVEKAETIGEVKVLAEQLPEGVAAGDLRTLAMDAKNRLGSEPAVVVFASVDGEKVPFVAAANDAAVDKGIKAGELVKTFGEKVAGRGGGKPAMAQGSGSDAAGISAGIEAVKSALRG</sequence>
<protein>
    <recommendedName>
        <fullName evidence="1">Alanine--tRNA ligase</fullName>
        <ecNumber evidence="1">6.1.1.7</ecNumber>
    </recommendedName>
    <alternativeName>
        <fullName evidence="1">Alanyl-tRNA synthetase</fullName>
        <shortName evidence="1">AlaRS</shortName>
    </alternativeName>
</protein>
<name>SYA_CORJK</name>